<keyword id="KW-0021">Allosteric enzyme</keyword>
<keyword id="KW-0963">Cytoplasm</keyword>
<keyword id="KW-0378">Hydrolase</keyword>
<keyword id="KW-0479">Metal-binding</keyword>
<keyword id="KW-0645">Protease</keyword>
<keyword id="KW-1185">Reference proteome</keyword>
<keyword id="KW-0915">Sodium</keyword>
<keyword id="KW-0888">Threonine protease</keyword>
<organism>
    <name type="scientific">Aeromonas hydrophila subsp. hydrophila (strain ATCC 7966 / DSM 30187 / BCRC 13018 / CCUG 14551 / JCM 1027 / KCTC 2358 / NCIMB 9240 / NCTC 8049)</name>
    <dbReference type="NCBI Taxonomy" id="380703"/>
    <lineage>
        <taxon>Bacteria</taxon>
        <taxon>Pseudomonadati</taxon>
        <taxon>Pseudomonadota</taxon>
        <taxon>Gammaproteobacteria</taxon>
        <taxon>Aeromonadales</taxon>
        <taxon>Aeromonadaceae</taxon>
        <taxon>Aeromonas</taxon>
    </lineage>
</organism>
<reference key="1">
    <citation type="journal article" date="2006" name="J. Bacteriol.">
        <title>Genome sequence of Aeromonas hydrophila ATCC 7966T: jack of all trades.</title>
        <authorList>
            <person name="Seshadri R."/>
            <person name="Joseph S.W."/>
            <person name="Chopra A.K."/>
            <person name="Sha J."/>
            <person name="Shaw J."/>
            <person name="Graf J."/>
            <person name="Haft D.H."/>
            <person name="Wu M."/>
            <person name="Ren Q."/>
            <person name="Rosovitz M.J."/>
            <person name="Madupu R."/>
            <person name="Tallon L."/>
            <person name="Kim M."/>
            <person name="Jin S."/>
            <person name="Vuong H."/>
            <person name="Stine O.C."/>
            <person name="Ali A."/>
            <person name="Horneman A.J."/>
            <person name="Heidelberg J.F."/>
        </authorList>
    </citation>
    <scope>NUCLEOTIDE SEQUENCE [LARGE SCALE GENOMIC DNA]</scope>
    <source>
        <strain>ATCC 7966 / DSM 30187 / BCRC 13018 / CCUG 14551 / JCM 1027 / KCTC 2358 / NCIMB 9240 / NCTC 8049</strain>
    </source>
</reference>
<feature type="chain" id="PRO_1000012570" description="ATP-dependent protease subunit HslV">
    <location>
        <begin position="1"/>
        <end position="177"/>
    </location>
</feature>
<feature type="active site" evidence="1">
    <location>
        <position position="2"/>
    </location>
</feature>
<feature type="binding site" evidence="1">
    <location>
        <position position="157"/>
    </location>
    <ligand>
        <name>Na(+)</name>
        <dbReference type="ChEBI" id="CHEBI:29101"/>
    </ligand>
</feature>
<feature type="binding site" evidence="1">
    <location>
        <position position="160"/>
    </location>
    <ligand>
        <name>Na(+)</name>
        <dbReference type="ChEBI" id="CHEBI:29101"/>
    </ligand>
</feature>
<feature type="binding site" evidence="1">
    <location>
        <position position="163"/>
    </location>
    <ligand>
        <name>Na(+)</name>
        <dbReference type="ChEBI" id="CHEBI:29101"/>
    </ligand>
</feature>
<proteinExistence type="inferred from homology"/>
<sequence length="177" mass="18896">MTTIVSVRRNGQVVIGGDGQVSLGNTVMKGNARKVHRLYNGKVLAGFAGGTADAFTLLERFEAKLQAHQGNLERAAVALAKDWRTDRALRRLEALLAVADEHKSFIITGNGDVVQPEHDLIAIGSGGNFAQSAAIALLENTELDAKSIVEKSLKIAGDICVFTNGNHTIEVLDYSAK</sequence>
<name>HSLV_AERHH</name>
<evidence type="ECO:0000255" key="1">
    <source>
        <dbReference type="HAMAP-Rule" id="MF_00248"/>
    </source>
</evidence>
<comment type="function">
    <text evidence="1">Protease subunit of a proteasome-like degradation complex believed to be a general protein degrading machinery.</text>
</comment>
<comment type="catalytic activity">
    <reaction evidence="1">
        <text>ATP-dependent cleavage of peptide bonds with broad specificity.</text>
        <dbReference type="EC" id="3.4.25.2"/>
    </reaction>
</comment>
<comment type="activity regulation">
    <text evidence="1">Allosterically activated by HslU binding.</text>
</comment>
<comment type="subunit">
    <text evidence="1">A double ring-shaped homohexamer of HslV is capped on each side by a ring-shaped HslU homohexamer. The assembly of the HslU/HslV complex is dependent on binding of ATP.</text>
</comment>
<comment type="subcellular location">
    <subcellularLocation>
        <location evidence="1">Cytoplasm</location>
    </subcellularLocation>
</comment>
<comment type="similarity">
    <text evidence="1">Belongs to the peptidase T1B family. HslV subfamily.</text>
</comment>
<protein>
    <recommendedName>
        <fullName evidence="1">ATP-dependent protease subunit HslV</fullName>
        <ecNumber evidence="1">3.4.25.2</ecNumber>
    </recommendedName>
</protein>
<accession>A0KQI7</accession>
<dbReference type="EC" id="3.4.25.2" evidence="1"/>
<dbReference type="EMBL" id="CP000462">
    <property type="protein sequence ID" value="ABK37314.1"/>
    <property type="molecule type" value="Genomic_DNA"/>
</dbReference>
<dbReference type="RefSeq" id="WP_005306539.1">
    <property type="nucleotide sequence ID" value="NC_008570.1"/>
</dbReference>
<dbReference type="RefSeq" id="YP_858538.1">
    <property type="nucleotide sequence ID" value="NC_008570.1"/>
</dbReference>
<dbReference type="SMR" id="A0KQI7"/>
<dbReference type="STRING" id="380703.AHA_4114"/>
<dbReference type="MEROPS" id="T01.007"/>
<dbReference type="EnsemblBacteria" id="ABK37314">
    <property type="protein sequence ID" value="ABK37314"/>
    <property type="gene ID" value="AHA_4114"/>
</dbReference>
<dbReference type="GeneID" id="4488131"/>
<dbReference type="KEGG" id="aha:AHA_4114"/>
<dbReference type="PATRIC" id="fig|380703.7.peg.4071"/>
<dbReference type="eggNOG" id="COG5405">
    <property type="taxonomic scope" value="Bacteria"/>
</dbReference>
<dbReference type="HOGENOM" id="CLU_093872_1_0_6"/>
<dbReference type="OrthoDB" id="9804884at2"/>
<dbReference type="PRO" id="PR:A0KQI7"/>
<dbReference type="Proteomes" id="UP000000756">
    <property type="component" value="Chromosome"/>
</dbReference>
<dbReference type="GO" id="GO:0009376">
    <property type="term" value="C:HslUV protease complex"/>
    <property type="evidence" value="ECO:0007669"/>
    <property type="project" value="UniProtKB-UniRule"/>
</dbReference>
<dbReference type="GO" id="GO:0005839">
    <property type="term" value="C:proteasome core complex"/>
    <property type="evidence" value="ECO:0007669"/>
    <property type="project" value="InterPro"/>
</dbReference>
<dbReference type="GO" id="GO:0046872">
    <property type="term" value="F:metal ion binding"/>
    <property type="evidence" value="ECO:0007669"/>
    <property type="project" value="UniProtKB-KW"/>
</dbReference>
<dbReference type="GO" id="GO:0004298">
    <property type="term" value="F:threonine-type endopeptidase activity"/>
    <property type="evidence" value="ECO:0007669"/>
    <property type="project" value="UniProtKB-KW"/>
</dbReference>
<dbReference type="GO" id="GO:0051603">
    <property type="term" value="P:proteolysis involved in protein catabolic process"/>
    <property type="evidence" value="ECO:0007669"/>
    <property type="project" value="InterPro"/>
</dbReference>
<dbReference type="CDD" id="cd01913">
    <property type="entry name" value="protease_HslV"/>
    <property type="match status" value="1"/>
</dbReference>
<dbReference type="FunFam" id="3.60.20.10:FF:000002">
    <property type="entry name" value="ATP-dependent protease subunit HslV"/>
    <property type="match status" value="1"/>
</dbReference>
<dbReference type="Gene3D" id="3.60.20.10">
    <property type="entry name" value="Glutamine Phosphoribosylpyrophosphate, subunit 1, domain 1"/>
    <property type="match status" value="1"/>
</dbReference>
<dbReference type="HAMAP" id="MF_00248">
    <property type="entry name" value="HslV"/>
    <property type="match status" value="1"/>
</dbReference>
<dbReference type="InterPro" id="IPR022281">
    <property type="entry name" value="ATP-dep_Prtase_HsIV_su"/>
</dbReference>
<dbReference type="InterPro" id="IPR029055">
    <property type="entry name" value="Ntn_hydrolases_N"/>
</dbReference>
<dbReference type="InterPro" id="IPR001353">
    <property type="entry name" value="Proteasome_sua/b"/>
</dbReference>
<dbReference type="InterPro" id="IPR023333">
    <property type="entry name" value="Proteasome_suB-type"/>
</dbReference>
<dbReference type="NCBIfam" id="TIGR03692">
    <property type="entry name" value="ATP_dep_HslV"/>
    <property type="match status" value="1"/>
</dbReference>
<dbReference type="NCBIfam" id="NF003964">
    <property type="entry name" value="PRK05456.1"/>
    <property type="match status" value="1"/>
</dbReference>
<dbReference type="PANTHER" id="PTHR32194:SF0">
    <property type="entry name" value="ATP-DEPENDENT PROTEASE SUBUNIT HSLV"/>
    <property type="match status" value="1"/>
</dbReference>
<dbReference type="PANTHER" id="PTHR32194">
    <property type="entry name" value="METALLOPROTEASE TLDD"/>
    <property type="match status" value="1"/>
</dbReference>
<dbReference type="Pfam" id="PF00227">
    <property type="entry name" value="Proteasome"/>
    <property type="match status" value="1"/>
</dbReference>
<dbReference type="PIRSF" id="PIRSF039093">
    <property type="entry name" value="HslV"/>
    <property type="match status" value="1"/>
</dbReference>
<dbReference type="SUPFAM" id="SSF56235">
    <property type="entry name" value="N-terminal nucleophile aminohydrolases (Ntn hydrolases)"/>
    <property type="match status" value="1"/>
</dbReference>
<dbReference type="PROSITE" id="PS51476">
    <property type="entry name" value="PROTEASOME_BETA_2"/>
    <property type="match status" value="1"/>
</dbReference>
<gene>
    <name evidence="1" type="primary">hslV</name>
    <name type="ordered locus">AHA_4114</name>
</gene>